<evidence type="ECO:0000255" key="1">
    <source>
        <dbReference type="HAMAP-Rule" id="MF_00595"/>
    </source>
</evidence>
<keyword id="KW-0120">Carbon dioxide fixation</keyword>
<keyword id="KW-0456">Lyase</keyword>
<keyword id="KW-0460">Magnesium</keyword>
<keyword id="KW-1185">Reference proteome</keyword>
<comment type="function">
    <text evidence="1">Forms oxaloacetate, a four-carbon dicarboxylic acid source for the tricarboxylic acid cycle.</text>
</comment>
<comment type="catalytic activity">
    <reaction evidence="1">
        <text>oxaloacetate + phosphate = phosphoenolpyruvate + hydrogencarbonate</text>
        <dbReference type="Rhea" id="RHEA:28370"/>
        <dbReference type="ChEBI" id="CHEBI:16452"/>
        <dbReference type="ChEBI" id="CHEBI:17544"/>
        <dbReference type="ChEBI" id="CHEBI:43474"/>
        <dbReference type="ChEBI" id="CHEBI:58702"/>
        <dbReference type="EC" id="4.1.1.31"/>
    </reaction>
</comment>
<comment type="cofactor">
    <cofactor evidence="1">
        <name>Mg(2+)</name>
        <dbReference type="ChEBI" id="CHEBI:18420"/>
    </cofactor>
</comment>
<comment type="similarity">
    <text evidence="1">Belongs to the PEPCase type 1 family.</text>
</comment>
<reference key="1">
    <citation type="journal article" date="2007" name="J. Bacteriol.">
        <title>Genome of the opportunistic pathogen Streptococcus sanguinis.</title>
        <authorList>
            <person name="Xu P."/>
            <person name="Alves J.M."/>
            <person name="Kitten T."/>
            <person name="Brown A."/>
            <person name="Chen Z."/>
            <person name="Ozaki L.S."/>
            <person name="Manque P."/>
            <person name="Ge X."/>
            <person name="Serrano M.G."/>
            <person name="Puiu D."/>
            <person name="Hendricks S."/>
            <person name="Wang Y."/>
            <person name="Chaplin M.D."/>
            <person name="Akan D."/>
            <person name="Paik S."/>
            <person name="Peterson D.L."/>
            <person name="Macrina F.L."/>
            <person name="Buck G.A."/>
        </authorList>
    </citation>
    <scope>NUCLEOTIDE SEQUENCE [LARGE SCALE GENOMIC DNA]</scope>
    <source>
        <strain>SK36</strain>
    </source>
</reference>
<organism>
    <name type="scientific">Streptococcus sanguinis (strain SK36)</name>
    <dbReference type="NCBI Taxonomy" id="388919"/>
    <lineage>
        <taxon>Bacteria</taxon>
        <taxon>Bacillati</taxon>
        <taxon>Bacillota</taxon>
        <taxon>Bacilli</taxon>
        <taxon>Lactobacillales</taxon>
        <taxon>Streptococcaceae</taxon>
        <taxon>Streptococcus</taxon>
    </lineage>
</organism>
<protein>
    <recommendedName>
        <fullName evidence="1">Phosphoenolpyruvate carboxylase</fullName>
        <shortName evidence="1">PEPC</shortName>
        <shortName evidence="1">PEPCase</shortName>
        <ecNumber evidence="1">4.1.1.31</ecNumber>
    </recommendedName>
</protein>
<dbReference type="EC" id="4.1.1.31" evidence="1"/>
<dbReference type="EMBL" id="CP000387">
    <property type="protein sequence ID" value="ABN44915.1"/>
    <property type="molecule type" value="Genomic_DNA"/>
</dbReference>
<dbReference type="RefSeq" id="WP_011837193.1">
    <property type="nucleotide sequence ID" value="NC_009009.1"/>
</dbReference>
<dbReference type="RefSeq" id="YP_001035465.1">
    <property type="nucleotide sequence ID" value="NC_009009.1"/>
</dbReference>
<dbReference type="SMR" id="A3CP10"/>
<dbReference type="STRING" id="388919.SSA_1521"/>
<dbReference type="KEGG" id="ssa:SSA_1521"/>
<dbReference type="PATRIC" id="fig|388919.9.peg.1445"/>
<dbReference type="eggNOG" id="COG2352">
    <property type="taxonomic scope" value="Bacteria"/>
</dbReference>
<dbReference type="HOGENOM" id="CLU_006557_2_0_9"/>
<dbReference type="OrthoDB" id="9768133at2"/>
<dbReference type="Proteomes" id="UP000002148">
    <property type="component" value="Chromosome"/>
</dbReference>
<dbReference type="GO" id="GO:0005829">
    <property type="term" value="C:cytosol"/>
    <property type="evidence" value="ECO:0007669"/>
    <property type="project" value="TreeGrafter"/>
</dbReference>
<dbReference type="GO" id="GO:0000287">
    <property type="term" value="F:magnesium ion binding"/>
    <property type="evidence" value="ECO:0007669"/>
    <property type="project" value="UniProtKB-UniRule"/>
</dbReference>
<dbReference type="GO" id="GO:0008964">
    <property type="term" value="F:phosphoenolpyruvate carboxylase activity"/>
    <property type="evidence" value="ECO:0007669"/>
    <property type="project" value="UniProtKB-UniRule"/>
</dbReference>
<dbReference type="GO" id="GO:0015977">
    <property type="term" value="P:carbon fixation"/>
    <property type="evidence" value="ECO:0007669"/>
    <property type="project" value="UniProtKB-UniRule"/>
</dbReference>
<dbReference type="GO" id="GO:0006107">
    <property type="term" value="P:oxaloacetate metabolic process"/>
    <property type="evidence" value="ECO:0007669"/>
    <property type="project" value="UniProtKB-UniRule"/>
</dbReference>
<dbReference type="GO" id="GO:0006099">
    <property type="term" value="P:tricarboxylic acid cycle"/>
    <property type="evidence" value="ECO:0007669"/>
    <property type="project" value="InterPro"/>
</dbReference>
<dbReference type="Gene3D" id="1.20.1440.90">
    <property type="entry name" value="Phosphoenolpyruvate/pyruvate domain"/>
    <property type="match status" value="1"/>
</dbReference>
<dbReference type="HAMAP" id="MF_00595">
    <property type="entry name" value="PEPcase_type1"/>
    <property type="match status" value="1"/>
</dbReference>
<dbReference type="InterPro" id="IPR021135">
    <property type="entry name" value="PEP_COase"/>
</dbReference>
<dbReference type="InterPro" id="IPR022805">
    <property type="entry name" value="PEP_COase_bac/pln-type"/>
</dbReference>
<dbReference type="InterPro" id="IPR018129">
    <property type="entry name" value="PEP_COase_Lys_AS"/>
</dbReference>
<dbReference type="InterPro" id="IPR033129">
    <property type="entry name" value="PEPCASE_His_AS"/>
</dbReference>
<dbReference type="InterPro" id="IPR015813">
    <property type="entry name" value="Pyrv/PenolPyrv_kinase-like_dom"/>
</dbReference>
<dbReference type="NCBIfam" id="NF000584">
    <property type="entry name" value="PRK00009.1"/>
    <property type="match status" value="1"/>
</dbReference>
<dbReference type="PANTHER" id="PTHR30523">
    <property type="entry name" value="PHOSPHOENOLPYRUVATE CARBOXYLASE"/>
    <property type="match status" value="1"/>
</dbReference>
<dbReference type="PANTHER" id="PTHR30523:SF6">
    <property type="entry name" value="PHOSPHOENOLPYRUVATE CARBOXYLASE"/>
    <property type="match status" value="1"/>
</dbReference>
<dbReference type="Pfam" id="PF00311">
    <property type="entry name" value="PEPcase"/>
    <property type="match status" value="1"/>
</dbReference>
<dbReference type="PRINTS" id="PR00150">
    <property type="entry name" value="PEPCARBXLASE"/>
</dbReference>
<dbReference type="SUPFAM" id="SSF51621">
    <property type="entry name" value="Phosphoenolpyruvate/pyruvate domain"/>
    <property type="match status" value="1"/>
</dbReference>
<dbReference type="PROSITE" id="PS00781">
    <property type="entry name" value="PEPCASE_1"/>
    <property type="match status" value="1"/>
</dbReference>
<dbReference type="PROSITE" id="PS00393">
    <property type="entry name" value="PEPCASE_2"/>
    <property type="match status" value="1"/>
</dbReference>
<accession>A3CP10</accession>
<feature type="chain" id="PRO_1000025596" description="Phosphoenolpyruvate carboxylase">
    <location>
        <begin position="1"/>
        <end position="948"/>
    </location>
</feature>
<feature type="active site" evidence="1">
    <location>
        <position position="138"/>
    </location>
</feature>
<feature type="active site" evidence="1">
    <location>
        <position position="610"/>
    </location>
</feature>
<gene>
    <name evidence="1" type="primary">ppc</name>
    <name type="ordered locus">SSA_1521</name>
</gene>
<name>CAPP_STRSV</name>
<sequence>MSFNKLESYSNKEVIREEVAILTDLLADITRNLLSPETFEKISLMEDLAVNSKYHELKAIVEELTTDEMVYISRYFSILPLLINISEDVDLAYEINHQNNINQDYLGKLSTTIDLISTRENAQEILENLNVVPVLTAHPTQVQRKTILDLTNHIHSLLRQHRDVKAGLVNEKKWLGNLRRYIELMMQTDMIREKKLKVTNEITNVMEYYNSSFLQAITNFMVEYRRLAEERGIKLDNPKPITMGMWIGGDRDGNPFVTAETLKLSATLQSEVILNYYIDKVYTLYRTFSLSTNLSETSQAVAEMAALSTDKSVYRENEPYRRAFHYIQSKLIQTLLYLKEGNFSNDGQRLTDRAEEKLSAKANLSVSNKGREIIPNYIQSRISETLTELKKEETPSYKTAQEFKEDLQVIYDSLIEHHGEALVSGDLTELLQAVDVFGFFLASIDMRQDSSVHEACVAELLASANIVQDYSSLSEEEKCQVLLKQLLEDPRILSATHEPKSELLQKELEIFKTARQLKDAIGEEVIKQNIISHSTSVSDLLELAIMLKEVGLIDENGARVQIVPLFETIEDLDNSCNTMEKYLSLPIAQKWIASKDNYQEIMLGYSDSNKDGGYLSSCWTLYKAQQQLTAIGDKFGVKITFFHGRGGTVGRGGGPTYEAITSQPLRSINDRIRLTEQGEVIGNKYGNKDAAYYNLEMLVSAAINRMVTHKKSDSHTSDKYERIMDQVVNRSYQIYRDLVFGDERFYDYFFESSPIKAISSFNIGSRPAARKTITEIGGLRAIPWVFSWSQSRVMFPGWYGVGSSFKEFIDEDPENNLAFLQFMYKRWPFFKSLLSNVDMVLSKSNMNIAFEYAQLCEDQNVRDIFNIILDEWQLTKDVILEIEGHDELLAENTYLRDSLHYRMPYFNVLNYIQLELIKRQRNGQLTPDQEKLIHITINGIATGLRNSG</sequence>
<proteinExistence type="inferred from homology"/>